<protein>
    <recommendedName>
        <fullName evidence="1">RNA-binding protein Hfq</fullName>
    </recommendedName>
</protein>
<accession>Q7VWL6</accession>
<reference key="1">
    <citation type="journal article" date="2003" name="Nat. Genet.">
        <title>Comparative analysis of the genome sequences of Bordetella pertussis, Bordetella parapertussis and Bordetella bronchiseptica.</title>
        <authorList>
            <person name="Parkhill J."/>
            <person name="Sebaihia M."/>
            <person name="Preston A."/>
            <person name="Murphy L.D."/>
            <person name="Thomson N.R."/>
            <person name="Harris D.E."/>
            <person name="Holden M.T.G."/>
            <person name="Churcher C.M."/>
            <person name="Bentley S.D."/>
            <person name="Mungall K.L."/>
            <person name="Cerdeno-Tarraga A.-M."/>
            <person name="Temple L."/>
            <person name="James K.D."/>
            <person name="Harris B."/>
            <person name="Quail M.A."/>
            <person name="Achtman M."/>
            <person name="Atkin R."/>
            <person name="Baker S."/>
            <person name="Basham D."/>
            <person name="Bason N."/>
            <person name="Cherevach I."/>
            <person name="Chillingworth T."/>
            <person name="Collins M."/>
            <person name="Cronin A."/>
            <person name="Davis P."/>
            <person name="Doggett J."/>
            <person name="Feltwell T."/>
            <person name="Goble A."/>
            <person name="Hamlin N."/>
            <person name="Hauser H."/>
            <person name="Holroyd S."/>
            <person name="Jagels K."/>
            <person name="Leather S."/>
            <person name="Moule S."/>
            <person name="Norberczak H."/>
            <person name="O'Neil S."/>
            <person name="Ormond D."/>
            <person name="Price C."/>
            <person name="Rabbinowitsch E."/>
            <person name="Rutter S."/>
            <person name="Sanders M."/>
            <person name="Saunders D."/>
            <person name="Seeger K."/>
            <person name="Sharp S."/>
            <person name="Simmonds M."/>
            <person name="Skelton J."/>
            <person name="Squares R."/>
            <person name="Squares S."/>
            <person name="Stevens K."/>
            <person name="Unwin L."/>
            <person name="Whitehead S."/>
            <person name="Barrell B.G."/>
            <person name="Maskell D.J."/>
        </authorList>
    </citation>
    <scope>NUCLEOTIDE SEQUENCE [LARGE SCALE GENOMIC DNA]</scope>
    <source>
        <strain>Tohama I / ATCC BAA-589 / NCTC 13251</strain>
    </source>
</reference>
<comment type="function">
    <text evidence="1">RNA chaperone that binds small regulatory RNA (sRNAs) and mRNAs to facilitate mRNA translational regulation in response to envelope stress, environmental stress and changes in metabolite concentrations. Also binds with high specificity to tRNAs.</text>
</comment>
<comment type="subunit">
    <text evidence="1">Homohexamer.</text>
</comment>
<comment type="similarity">
    <text evidence="1">Belongs to the Hfq family.</text>
</comment>
<gene>
    <name evidence="1" type="primary">hfq</name>
    <name type="ordered locus">BP2193</name>
</gene>
<feature type="chain" id="PRO_0000095626" description="RNA-binding protein Hfq">
    <location>
        <begin position="1"/>
        <end position="78"/>
    </location>
</feature>
<feature type="domain" description="Sm" evidence="2">
    <location>
        <begin position="10"/>
        <end position="69"/>
    </location>
</feature>
<keyword id="KW-1185">Reference proteome</keyword>
<keyword id="KW-0694">RNA-binding</keyword>
<keyword id="KW-0346">Stress response</keyword>
<organism>
    <name type="scientific">Bordetella pertussis (strain Tohama I / ATCC BAA-589 / NCTC 13251)</name>
    <dbReference type="NCBI Taxonomy" id="257313"/>
    <lineage>
        <taxon>Bacteria</taxon>
        <taxon>Pseudomonadati</taxon>
        <taxon>Pseudomonadota</taxon>
        <taxon>Betaproteobacteria</taxon>
        <taxon>Burkholderiales</taxon>
        <taxon>Alcaligenaceae</taxon>
        <taxon>Bordetella</taxon>
    </lineage>
</organism>
<dbReference type="EMBL" id="BX640417">
    <property type="protein sequence ID" value="CAE42471.1"/>
    <property type="molecule type" value="Genomic_DNA"/>
</dbReference>
<dbReference type="RefSeq" id="NP_880841.1">
    <property type="nucleotide sequence ID" value="NC_002929.2"/>
</dbReference>
<dbReference type="RefSeq" id="WP_003810707.1">
    <property type="nucleotide sequence ID" value="NZ_CP039022.1"/>
</dbReference>
<dbReference type="SMR" id="Q7VWL6"/>
<dbReference type="STRING" id="257313.BP2193"/>
<dbReference type="PaxDb" id="257313-BP2193"/>
<dbReference type="GeneID" id="93204636"/>
<dbReference type="KEGG" id="bpe:BP2193"/>
<dbReference type="PATRIC" id="fig|257313.5.peg.2367"/>
<dbReference type="eggNOG" id="COG1923">
    <property type="taxonomic scope" value="Bacteria"/>
</dbReference>
<dbReference type="HOGENOM" id="CLU_113688_2_2_4"/>
<dbReference type="PHI-base" id="PHI:9251"/>
<dbReference type="PHI-base" id="PHI:9574"/>
<dbReference type="PRO" id="PR:Q7VWL6"/>
<dbReference type="Proteomes" id="UP000002676">
    <property type="component" value="Chromosome"/>
</dbReference>
<dbReference type="GO" id="GO:0005829">
    <property type="term" value="C:cytosol"/>
    <property type="evidence" value="ECO:0007669"/>
    <property type="project" value="TreeGrafter"/>
</dbReference>
<dbReference type="GO" id="GO:0003723">
    <property type="term" value="F:RNA binding"/>
    <property type="evidence" value="ECO:0007669"/>
    <property type="project" value="UniProtKB-UniRule"/>
</dbReference>
<dbReference type="GO" id="GO:0006355">
    <property type="term" value="P:regulation of DNA-templated transcription"/>
    <property type="evidence" value="ECO:0007669"/>
    <property type="project" value="InterPro"/>
</dbReference>
<dbReference type="GO" id="GO:0043487">
    <property type="term" value="P:regulation of RNA stability"/>
    <property type="evidence" value="ECO:0007669"/>
    <property type="project" value="TreeGrafter"/>
</dbReference>
<dbReference type="GO" id="GO:0045974">
    <property type="term" value="P:regulation of translation, ncRNA-mediated"/>
    <property type="evidence" value="ECO:0007669"/>
    <property type="project" value="TreeGrafter"/>
</dbReference>
<dbReference type="CDD" id="cd01716">
    <property type="entry name" value="Hfq"/>
    <property type="match status" value="1"/>
</dbReference>
<dbReference type="FunFam" id="2.30.30.100:FF:000001">
    <property type="entry name" value="RNA-binding protein Hfq"/>
    <property type="match status" value="1"/>
</dbReference>
<dbReference type="Gene3D" id="2.30.30.100">
    <property type="match status" value="1"/>
</dbReference>
<dbReference type="HAMAP" id="MF_00436">
    <property type="entry name" value="Hfq"/>
    <property type="match status" value="1"/>
</dbReference>
<dbReference type="InterPro" id="IPR005001">
    <property type="entry name" value="Hfq"/>
</dbReference>
<dbReference type="InterPro" id="IPR010920">
    <property type="entry name" value="LSM_dom_sf"/>
</dbReference>
<dbReference type="InterPro" id="IPR047575">
    <property type="entry name" value="Sm"/>
</dbReference>
<dbReference type="NCBIfam" id="TIGR02383">
    <property type="entry name" value="Hfq"/>
    <property type="match status" value="1"/>
</dbReference>
<dbReference type="NCBIfam" id="NF001602">
    <property type="entry name" value="PRK00395.1"/>
    <property type="match status" value="1"/>
</dbReference>
<dbReference type="PANTHER" id="PTHR34772">
    <property type="entry name" value="RNA-BINDING PROTEIN HFQ"/>
    <property type="match status" value="1"/>
</dbReference>
<dbReference type="PANTHER" id="PTHR34772:SF1">
    <property type="entry name" value="RNA-BINDING PROTEIN HFQ"/>
    <property type="match status" value="1"/>
</dbReference>
<dbReference type="Pfam" id="PF17209">
    <property type="entry name" value="Hfq"/>
    <property type="match status" value="1"/>
</dbReference>
<dbReference type="SUPFAM" id="SSF50182">
    <property type="entry name" value="Sm-like ribonucleoproteins"/>
    <property type="match status" value="1"/>
</dbReference>
<dbReference type="PROSITE" id="PS52002">
    <property type="entry name" value="SM"/>
    <property type="match status" value="1"/>
</dbReference>
<evidence type="ECO:0000255" key="1">
    <source>
        <dbReference type="HAMAP-Rule" id="MF_00436"/>
    </source>
</evidence>
<evidence type="ECO:0000255" key="2">
    <source>
        <dbReference type="PROSITE-ProRule" id="PRU01346"/>
    </source>
</evidence>
<proteinExistence type="inferred from homology"/>
<sequence>MSNKGQTLQDPFLNTLRKEHVPVSIYLVNGIKLQGQIESFDQYVVLLRNTVTQMVYKHAISTVVPARAVNFQVEVPAE</sequence>
<name>HFQ_BORPE</name>